<name>SMALL_TMEVD</name>
<sequence>MDTQMCALFAQPLTLLPDLNICSWQTVNGSQRTFFVWTWTMTSSGLRTRAINLKQWNGLTYRSYAILSWNPRETPLHLTRVTPSPQVTKGSLSTTSIPINTKIQLICLPAVAMLATPPKTTDNCRTSWAALQMLLLLWHLSSWIKTQRRWRISLTE</sequence>
<protein>
    <recommendedName>
        <fullName>Protein L*</fullName>
    </recommendedName>
</protein>
<evidence type="ECO:0000269" key="1">
    <source>
    </source>
</evidence>
<comment type="function">
    <text evidence="1">May be required for viral persistance in the host.</text>
</comment>
<accession>P0DJX4</accession>
<feature type="chain" id="PRO_0000423142" description="Protein L*">
    <location>
        <begin position="1"/>
        <end position="156"/>
    </location>
</feature>
<proteinExistence type="predicted"/>
<reference key="1">
    <citation type="journal article" date="1988" name="Virology">
        <title>Molecular cloning and sequence determination of DA strain of Theiler's murine encephalomyelitis viruses.</title>
        <authorList>
            <person name="Ohara Y."/>
            <person name="Stein S."/>
            <person name="Fu J."/>
            <person name="Stillman L."/>
            <person name="Klaman L."/>
            <person name="Roos R.P."/>
        </authorList>
    </citation>
    <scope>NUCLEOTIDE SEQUENCE [GENOMIC RNA]</scope>
</reference>
<reference key="2">
    <citation type="journal article" date="2002" name="J. Virol.">
        <title>Non-AUG-initiated internal translation of the L* protein of Theiler's virus and importance of this protein for viral persistence.</title>
        <authorList>
            <person name="van Eyll O."/>
            <person name="Michiels T."/>
        </authorList>
    </citation>
    <scope>FUNCTION</scope>
</reference>
<organism>
    <name type="scientific">Theiler's murine encephalomyelitis virus (strain DA)</name>
    <name type="common">TMEV</name>
    <dbReference type="NCBI Taxonomy" id="12126"/>
    <lineage>
        <taxon>Viruses</taxon>
        <taxon>Riboviria</taxon>
        <taxon>Orthornavirae</taxon>
        <taxon>Pisuviricota</taxon>
        <taxon>Pisoniviricetes</taxon>
        <taxon>Picornavirales</taxon>
        <taxon>Picornaviridae</taxon>
        <taxon>Caphthovirinae</taxon>
        <taxon>Cardiovirus</taxon>
        <taxon>Cardiovirus B</taxon>
    </lineage>
</organism>
<organismHost>
    <name type="scientific">Mus musculus</name>
    <name type="common">Mouse</name>
    <dbReference type="NCBI Taxonomy" id="10090"/>
</organismHost>
<dbReference type="EMBL" id="M20301">
    <property type="status" value="NOT_ANNOTATED_CDS"/>
    <property type="molecule type" value="Genomic_RNA"/>
</dbReference>
<dbReference type="Proteomes" id="UP000000283">
    <property type="component" value="Genome"/>
</dbReference>